<accession>Q15386</accession>
<accession>A4D235</accession>
<accession>A6NCP3</accession>
<accession>Q8TC15</accession>
<accession>Q96CR4</accession>
<accession>Q9UDU3</accession>
<organism>
    <name type="scientific">Homo sapiens</name>
    <name type="common">Human</name>
    <dbReference type="NCBI Taxonomy" id="9606"/>
    <lineage>
        <taxon>Eukaryota</taxon>
        <taxon>Metazoa</taxon>
        <taxon>Chordata</taxon>
        <taxon>Craniata</taxon>
        <taxon>Vertebrata</taxon>
        <taxon>Euteleostomi</taxon>
        <taxon>Mammalia</taxon>
        <taxon>Eutheria</taxon>
        <taxon>Euarchontoglires</taxon>
        <taxon>Primates</taxon>
        <taxon>Haplorrhini</taxon>
        <taxon>Catarrhini</taxon>
        <taxon>Hominidae</taxon>
        <taxon>Homo</taxon>
    </lineage>
</organism>
<protein>
    <recommendedName>
        <fullName evidence="26">Ubiquitin-protein ligase E3C</fullName>
        <ecNumber evidence="4 10 11 12 15 16 17">2.3.2.26</ecNumber>
    </recommendedName>
    <alternativeName>
        <fullName evidence="26">HECT-type ubiquitin transferase E3C</fullName>
    </alternativeName>
    <alternativeName>
        <fullName evidence="25">Homologous to E6AP carboxyl terminus homologous protein 2</fullName>
        <shortName evidence="25">HectH2</shortName>
    </alternativeName>
    <alternativeName>
        <fullName evidence="23">RTA-associated ubiquitin ligase</fullName>
        <shortName evidence="23">RAUL</shortName>
    </alternativeName>
</protein>
<name>UBE3C_HUMAN</name>
<reference key="1">
    <citation type="journal article" date="1994" name="DNA Res.">
        <title>Prediction of the coding sequences of unidentified human genes. I. The coding sequences of 40 new genes (KIAA0001-KIAA0040) deduced by analysis of randomly sampled cDNA clones from human immature myeloid cell line KG-1.</title>
        <authorList>
            <person name="Nomura N."/>
            <person name="Miyajima N."/>
            <person name="Sazuka T."/>
            <person name="Tanaka A."/>
            <person name="Kawarabayasi Y."/>
            <person name="Sato S."/>
            <person name="Nagase T."/>
            <person name="Seki N."/>
            <person name="Ishikawa K."/>
            <person name="Tabata S."/>
        </authorList>
    </citation>
    <scope>NUCLEOTIDE SEQUENCE [LARGE SCALE MRNA] (ISOFORM 1)</scope>
    <source>
        <tissue>Bone marrow</tissue>
    </source>
</reference>
<reference key="2">
    <citation type="journal article" date="2003" name="Nature">
        <title>The DNA sequence of human chromosome 7.</title>
        <authorList>
            <person name="Hillier L.W."/>
            <person name="Fulton R.S."/>
            <person name="Fulton L.A."/>
            <person name="Graves T.A."/>
            <person name="Pepin K.H."/>
            <person name="Wagner-McPherson C."/>
            <person name="Layman D."/>
            <person name="Maas J."/>
            <person name="Jaeger S."/>
            <person name="Walker R."/>
            <person name="Wylie K."/>
            <person name="Sekhon M."/>
            <person name="Becker M.C."/>
            <person name="O'Laughlin M.D."/>
            <person name="Schaller M.E."/>
            <person name="Fewell G.A."/>
            <person name="Delehaunty K.D."/>
            <person name="Miner T.L."/>
            <person name="Nash W.E."/>
            <person name="Cordes M."/>
            <person name="Du H."/>
            <person name="Sun H."/>
            <person name="Edwards J."/>
            <person name="Bradshaw-Cordum H."/>
            <person name="Ali J."/>
            <person name="Andrews S."/>
            <person name="Isak A."/>
            <person name="Vanbrunt A."/>
            <person name="Nguyen C."/>
            <person name="Du F."/>
            <person name="Lamar B."/>
            <person name="Courtney L."/>
            <person name="Kalicki J."/>
            <person name="Ozersky P."/>
            <person name="Bielicki L."/>
            <person name="Scott K."/>
            <person name="Holmes A."/>
            <person name="Harkins R."/>
            <person name="Harris A."/>
            <person name="Strong C.M."/>
            <person name="Hou S."/>
            <person name="Tomlinson C."/>
            <person name="Dauphin-Kohlberg S."/>
            <person name="Kozlowicz-Reilly A."/>
            <person name="Leonard S."/>
            <person name="Rohlfing T."/>
            <person name="Rock S.M."/>
            <person name="Tin-Wollam A.-M."/>
            <person name="Abbott A."/>
            <person name="Minx P."/>
            <person name="Maupin R."/>
            <person name="Strowmatt C."/>
            <person name="Latreille P."/>
            <person name="Miller N."/>
            <person name="Johnson D."/>
            <person name="Murray J."/>
            <person name="Woessner J.P."/>
            <person name="Wendl M.C."/>
            <person name="Yang S.-P."/>
            <person name="Schultz B.R."/>
            <person name="Wallis J.W."/>
            <person name="Spieth J."/>
            <person name="Bieri T.A."/>
            <person name="Nelson J.O."/>
            <person name="Berkowicz N."/>
            <person name="Wohldmann P.E."/>
            <person name="Cook L.L."/>
            <person name="Hickenbotham M.T."/>
            <person name="Eldred J."/>
            <person name="Williams D."/>
            <person name="Bedell J.A."/>
            <person name="Mardis E.R."/>
            <person name="Clifton S.W."/>
            <person name="Chissoe S.L."/>
            <person name="Marra M.A."/>
            <person name="Raymond C."/>
            <person name="Haugen E."/>
            <person name="Gillett W."/>
            <person name="Zhou Y."/>
            <person name="James R."/>
            <person name="Phelps K."/>
            <person name="Iadanoto S."/>
            <person name="Bubb K."/>
            <person name="Simms E."/>
            <person name="Levy R."/>
            <person name="Clendenning J."/>
            <person name="Kaul R."/>
            <person name="Kent W.J."/>
            <person name="Furey T.S."/>
            <person name="Baertsch R.A."/>
            <person name="Brent M.R."/>
            <person name="Keibler E."/>
            <person name="Flicek P."/>
            <person name="Bork P."/>
            <person name="Suyama M."/>
            <person name="Bailey J.A."/>
            <person name="Portnoy M.E."/>
            <person name="Torrents D."/>
            <person name="Chinwalla A.T."/>
            <person name="Gish W.R."/>
            <person name="Eddy S.R."/>
            <person name="McPherson J.D."/>
            <person name="Olson M.V."/>
            <person name="Eichler E.E."/>
            <person name="Green E.D."/>
            <person name="Waterston R.H."/>
            <person name="Wilson R.K."/>
        </authorList>
    </citation>
    <scope>NUCLEOTIDE SEQUENCE [LARGE SCALE GENOMIC DNA]</scope>
</reference>
<reference key="3">
    <citation type="journal article" date="2003" name="Science">
        <title>Human chromosome 7: DNA sequence and biology.</title>
        <authorList>
            <person name="Scherer S.W."/>
            <person name="Cheung J."/>
            <person name="MacDonald J.R."/>
            <person name="Osborne L.R."/>
            <person name="Nakabayashi K."/>
            <person name="Herbrick J.-A."/>
            <person name="Carson A.R."/>
            <person name="Parker-Katiraee L."/>
            <person name="Skaug J."/>
            <person name="Khaja R."/>
            <person name="Zhang J."/>
            <person name="Hudek A.K."/>
            <person name="Li M."/>
            <person name="Haddad M."/>
            <person name="Duggan G.E."/>
            <person name="Fernandez B.A."/>
            <person name="Kanematsu E."/>
            <person name="Gentles S."/>
            <person name="Christopoulos C.C."/>
            <person name="Choufani S."/>
            <person name="Kwasnicka D."/>
            <person name="Zheng X.H."/>
            <person name="Lai Z."/>
            <person name="Nusskern D.R."/>
            <person name="Zhang Q."/>
            <person name="Gu Z."/>
            <person name="Lu F."/>
            <person name="Zeesman S."/>
            <person name="Nowaczyk M.J."/>
            <person name="Teshima I."/>
            <person name="Chitayat D."/>
            <person name="Shuman C."/>
            <person name="Weksberg R."/>
            <person name="Zackai E.H."/>
            <person name="Grebe T.A."/>
            <person name="Cox S.R."/>
            <person name="Kirkpatrick S.J."/>
            <person name="Rahman N."/>
            <person name="Friedman J.M."/>
            <person name="Heng H.H.Q."/>
            <person name="Pelicci P.G."/>
            <person name="Lo-Coco F."/>
            <person name="Belloni E."/>
            <person name="Shaffer L.G."/>
            <person name="Pober B."/>
            <person name="Morton C.C."/>
            <person name="Gusella J.F."/>
            <person name="Bruns G.A.P."/>
            <person name="Korf B.R."/>
            <person name="Quade B.J."/>
            <person name="Ligon A.H."/>
            <person name="Ferguson H."/>
            <person name="Higgins A.W."/>
            <person name="Leach N.T."/>
            <person name="Herrick S.R."/>
            <person name="Lemyre E."/>
            <person name="Farra C.G."/>
            <person name="Kim H.-G."/>
            <person name="Summers A.M."/>
            <person name="Gripp K.W."/>
            <person name="Roberts W."/>
            <person name="Szatmari P."/>
            <person name="Winsor E.J.T."/>
            <person name="Grzeschik K.-H."/>
            <person name="Teebi A."/>
            <person name="Minassian B.A."/>
            <person name="Kere J."/>
            <person name="Armengol L."/>
            <person name="Pujana M.A."/>
            <person name="Estivill X."/>
            <person name="Wilson M.D."/>
            <person name="Koop B.F."/>
            <person name="Tosi S."/>
            <person name="Moore G.E."/>
            <person name="Boright A.P."/>
            <person name="Zlotorynski E."/>
            <person name="Kerem B."/>
            <person name="Kroisel P.M."/>
            <person name="Petek E."/>
            <person name="Oscier D.G."/>
            <person name="Mould S.J."/>
            <person name="Doehner H."/>
            <person name="Doehner K."/>
            <person name="Rommens J.M."/>
            <person name="Vincent J.B."/>
            <person name="Venter J.C."/>
            <person name="Li P.W."/>
            <person name="Mural R.J."/>
            <person name="Adams M.D."/>
            <person name="Tsui L.-C."/>
        </authorList>
    </citation>
    <scope>NUCLEOTIDE SEQUENCE [LARGE SCALE GENOMIC DNA]</scope>
</reference>
<reference key="4">
    <citation type="submission" date="2005-07" db="EMBL/GenBank/DDBJ databases">
        <authorList>
            <person name="Mural R.J."/>
            <person name="Istrail S."/>
            <person name="Sutton G.G."/>
            <person name="Florea L."/>
            <person name="Halpern A.L."/>
            <person name="Mobarry C.M."/>
            <person name="Lippert R."/>
            <person name="Walenz B."/>
            <person name="Shatkay H."/>
            <person name="Dew I."/>
            <person name="Miller J.R."/>
            <person name="Flanigan M.J."/>
            <person name="Edwards N.J."/>
            <person name="Bolanos R."/>
            <person name="Fasulo D."/>
            <person name="Halldorsson B.V."/>
            <person name="Hannenhalli S."/>
            <person name="Turner R."/>
            <person name="Yooseph S."/>
            <person name="Lu F."/>
            <person name="Nusskern D.R."/>
            <person name="Shue B.C."/>
            <person name="Zheng X.H."/>
            <person name="Zhong F."/>
            <person name="Delcher A.L."/>
            <person name="Huson D.H."/>
            <person name="Kravitz S.A."/>
            <person name="Mouchard L."/>
            <person name="Reinert K."/>
            <person name="Remington K.A."/>
            <person name="Clark A.G."/>
            <person name="Waterman M.S."/>
            <person name="Eichler E.E."/>
            <person name="Adams M.D."/>
            <person name="Hunkapiller M.W."/>
            <person name="Myers E.W."/>
            <person name="Venter J.C."/>
        </authorList>
    </citation>
    <scope>NUCLEOTIDE SEQUENCE [LARGE SCALE GENOMIC DNA]</scope>
</reference>
<reference key="5">
    <citation type="journal article" date="2004" name="Genome Res.">
        <title>The status, quality, and expansion of the NIH full-length cDNA project: the Mammalian Gene Collection (MGC).</title>
        <authorList>
            <consortium name="The MGC Project Team"/>
        </authorList>
    </citation>
    <scope>NUCLEOTIDE SEQUENCE [LARGE SCALE MRNA] (ISOFORMS 2 AND 3)</scope>
    <source>
        <tissue>Lung</tissue>
        <tissue>Placenta</tissue>
    </source>
</reference>
<reference key="6">
    <citation type="journal article" date="2001" name="J. Biol. Chem.">
        <title>A HECT domain E3 enzyme assembles novel polyubiquitin chains.</title>
        <authorList>
            <person name="You J."/>
            <person name="Pickart C.M."/>
        </authorList>
    </citation>
    <scope>PARTIAL PROTEIN SEQUENCE</scope>
    <scope>FUNCTION</scope>
    <scope>CATALYTIC ACTIVITY</scope>
    <scope>PATHWAY</scope>
    <scope>INTERACTION WITH UBE2D1</scope>
    <scope>AUTOUBIQUITINATION</scope>
    <scope>TISSUE SPECIFICITY</scope>
</reference>
<reference key="7">
    <citation type="journal article" date="1998" name="J. Biol. Chem.">
        <title>Characterization of human hect domain family members and their interaction with UbcH5 and UbcH7.</title>
        <authorList>
            <person name="Schwarz S.E."/>
            <person name="Rosa J.L."/>
            <person name="Scheffner M."/>
        </authorList>
    </citation>
    <scope>FUNCTION</scope>
    <scope>INTERACTION WITH UBE2D1 AND UBE2L3</scope>
    <scope>TISSUE SPECIFICITY</scope>
</reference>
<reference key="8">
    <citation type="journal article" date="2003" name="J. Biol. Chem.">
        <title>Proteolytic targeting of transcriptional regulator TIP120B by a HECT domain E3 ligase.</title>
        <authorList>
            <person name="You J."/>
            <person name="Wang M."/>
            <person name="Aoki T."/>
            <person name="Tamura T.-A."/>
            <person name="Pickart C.M."/>
        </authorList>
    </citation>
    <scope>FUNCTION IN CAND2 UBIQUITINATION</scope>
    <scope>PATHWAY</scope>
    <scope>INTERACTION WITH CAND2 AND 26S PROTEASOMES</scope>
    <scope>ACTIVE SITE</scope>
    <scope>MUTAGENESIS OF CYS-1051</scope>
    <scope>TISSUE SPECIFICITY</scope>
</reference>
<reference key="9">
    <citation type="journal article" date="2005" name="EMBO J.">
        <title>Different HECT domain ubiquitin ligases employ distinct mechanisms of polyubiquitin chain synthesis.</title>
        <authorList>
            <person name="Wang M."/>
            <person name="Pickart C.M."/>
        </authorList>
    </citation>
    <scope>FUNCTION</scope>
</reference>
<reference key="10">
    <citation type="journal article" date="2006" name="EMBO J.">
        <title>Molecular determinants of polyubiquitin linkage selection by an HECT ubiquitin ligase.</title>
        <authorList>
            <person name="Wang M."/>
            <person name="Cheng D."/>
            <person name="Peng J."/>
            <person name="Pickart C.M."/>
        </authorList>
    </citation>
    <scope>FUNCTION</scope>
    <scope>PATHWAY</scope>
    <scope>IDENTIFICATION BY MASS SPECTROMETRY</scope>
</reference>
<reference key="11">
    <citation type="journal article" date="2007" name="Biochemistry">
        <title>Mass spectrometric characterization of the affinity-purified human 26S proteasome complex.</title>
        <authorList>
            <person name="Wang X."/>
            <person name="Chen C.-F."/>
            <person name="Baker P.R."/>
            <person name="Chen P.-L."/>
            <person name="Kaiser P."/>
            <person name="Huang L."/>
        </authorList>
    </citation>
    <scope>IDENTIFICATION BY MASS SPECTROMETRY [LARGE SCALE ANALYSIS]</scope>
    <source>
        <tissue>Embryonic kidney</tissue>
    </source>
</reference>
<reference key="12">
    <citation type="journal article" date="2010" name="Immunity">
        <title>The ubiquitin E3 ligase RAUL negatively regulates type i interferon through ubiquitination of the transcription factors IRF7 and IRF3.</title>
        <authorList>
            <person name="Yu Y."/>
            <person name="Hayward G.S."/>
        </authorList>
    </citation>
    <scope>FUNCTION</scope>
    <scope>PATHWAY</scope>
    <scope>ACTIVE SITE</scope>
    <scope>MUTAGENESIS OF CYS-1051</scope>
</reference>
<reference key="13">
    <citation type="journal article" date="2011" name="BMC Syst. Biol.">
        <title>Initial characterization of the human central proteome.</title>
        <authorList>
            <person name="Burkard T.R."/>
            <person name="Planyavsky M."/>
            <person name="Kaupe I."/>
            <person name="Breitwieser F.P."/>
            <person name="Buerckstuemmer T."/>
            <person name="Bennett K.L."/>
            <person name="Superti-Furga G."/>
            <person name="Colinge J."/>
        </authorList>
    </citation>
    <scope>IDENTIFICATION BY MASS SPECTROMETRY [LARGE SCALE ANALYSIS]</scope>
</reference>
<reference key="14">
    <citation type="journal article" date="2014" name="EMBO J.">
        <title>Autoubiquitination of the 26S proteasome on Rpn13 regulates breakdown of ubiquitin conjugates.</title>
        <authorList>
            <person name="Besche H.C."/>
            <person name="Sha Z."/>
            <person name="Kukushkin N.V."/>
            <person name="Peth A."/>
            <person name="Hock E.M."/>
            <person name="Kim W."/>
            <person name="Gygi S."/>
            <person name="Gutierrez J.A."/>
            <person name="Liao H."/>
            <person name="Dick L."/>
            <person name="Goldberg A.L."/>
        </authorList>
    </citation>
    <scope>FUNCTION</scope>
    <scope>CATALYTIC ACTIVITY</scope>
    <scope>PATHWAY</scope>
    <scope>ACTIVE SITE</scope>
    <scope>MUTAGENESIS OF CYS-1051</scope>
</reference>
<reference key="15">
    <citation type="journal article" date="2013" name="J. Biol. Chem.">
        <title>The E3 ubiquitin ligase UBE3C enhances proteasome processivity by ubiquitinating partially proteolyzed substrates.</title>
        <authorList>
            <person name="Chu B.W."/>
            <person name="Kovary K.M."/>
            <person name="Guillaume J."/>
            <person name="Chen L.C."/>
            <person name="Teruel M.N."/>
            <person name="Wandless T.J."/>
        </authorList>
    </citation>
    <scope>FUNCTION</scope>
    <scope>INTERACTION WITH THE 26S PROTEASOME</scope>
    <scope>CATALYTIC ACTIVITY</scope>
    <scope>PATHWAY</scope>
    <scope>ACTIVE SITE</scope>
    <scope>MUTAGENESIS OF CYS-1051</scope>
</reference>
<reference key="16">
    <citation type="journal article" date="2015" name="Mol. Cell">
        <title>K29-selective ubiquitin binding domain reveals structural basis of specificity and heterotypic nature of K29 polyubiquitin.</title>
        <authorList>
            <person name="Kristariyanto Y.A."/>
            <person name="Abdul Rehman S.A."/>
            <person name="Campbell D.G."/>
            <person name="Morrice N.A."/>
            <person name="Johnson C."/>
            <person name="Toth R."/>
            <person name="Kulathu Y."/>
        </authorList>
    </citation>
    <scope>FUNCTION</scope>
    <scope>CATALYTIC ACTIVITY</scope>
    <scope>ACTIVE SITE</scope>
    <scope>AUTOUBIQUITINATION</scope>
    <scope>PATHWAY</scope>
    <scope>MUTAGENESIS OF CYS-1051</scope>
</reference>
<reference key="17">
    <citation type="journal article" date="2015" name="Mol. Cell">
        <title>Assembly and specific recognition of K29- and K33-linked polyubiquitin.</title>
        <authorList>
            <person name="Michel M.A."/>
            <person name="Elliott P.R."/>
            <person name="Swatek K.N."/>
            <person name="Simicek M."/>
            <person name="Pruneda J.N."/>
            <person name="Wagstaff J.L."/>
            <person name="Freund S.M."/>
            <person name="Komander D."/>
        </authorList>
    </citation>
    <scope>FUNCTION</scope>
    <scope>CATALYTIC ACTIVITY</scope>
    <scope>PATHWAY</scope>
</reference>
<reference key="18">
    <citation type="journal article" date="2017" name="Proc. Natl. Acad. Sci. U.S.A.">
        <title>Ubiquitinated proteins promote the association of proteasomes with the deubiquitinating enzyme Usp14 and the ubiquitin ligase Ube3c.</title>
        <authorList>
            <person name="Kuo C.L."/>
            <person name="Goldberg A.L."/>
        </authorList>
    </citation>
    <scope>FUNCTION</scope>
</reference>
<reference key="19">
    <citation type="journal article" date="2019" name="J. Biol. Chem.">
        <title>Acute unfolding of a single protein immediately stimulates recruitment of ubiquitin protein ligase E3C (UBE3C) to 26S proteasomes.</title>
        <authorList>
            <person name="Gottlieb C.D."/>
            <person name="Thompson A.C.S."/>
            <person name="Ordureau A."/>
            <person name="Harper J.W."/>
            <person name="Kopito R.R."/>
        </authorList>
    </citation>
    <scope>FUNCTION</scope>
</reference>
<reference key="20">
    <citation type="journal article" date="2021" name="Nat. Chem. Biol.">
        <title>K29-linked ubiquitin signaling regulates proteotoxic stress response and cell cycle.</title>
        <authorList>
            <person name="Yu Y."/>
            <person name="Zheng Q."/>
            <person name="Erramilli S.K."/>
            <person name="Pan M."/>
            <person name="Park S."/>
            <person name="Xie Y."/>
            <person name="Li J."/>
            <person name="Fei J."/>
            <person name="Kossiakoff A.A."/>
            <person name="Liu L."/>
            <person name="Zhao M."/>
        </authorList>
    </citation>
    <scope>FUNCTION</scope>
    <scope>CATALYTIC ACTIVITY</scope>
    <scope>PATHWAY</scope>
</reference>
<reference key="21">
    <citation type="journal article" date="2021" name="Nat. Commun.">
        <title>VPS34 K29/K48 branched ubiquitination governed by UBE3C and TRABID regulates autophagy, proteostasis and liver metabolism.</title>
        <authorList>
            <person name="Chen Y.H."/>
            <person name="Huang T.Y."/>
            <person name="Lin Y.T."/>
            <person name="Lin S.Y."/>
            <person name="Li W.H."/>
            <person name="Hsiao H.J."/>
            <person name="Yan R.L."/>
            <person name="Tang H.W."/>
            <person name="Shen Z.Q."/>
            <person name="Chen G.C."/>
            <person name="Wu K.P."/>
            <person name="Tsai T.F."/>
            <person name="Chen R.H."/>
        </authorList>
    </citation>
    <scope>FUNCTION</scope>
    <scope>CATALYTIC ACTIVITY</scope>
    <scope>PATHWAY</scope>
</reference>
<reference evidence="33" key="22">
    <citation type="journal article" date="2020" name="Biochem. J.">
        <title>Crystal structure of HECT domain of UBE3C E3 ligase and its ubiquitination activity.</title>
        <authorList>
            <person name="Singh S."/>
            <person name="Sivaraman J."/>
        </authorList>
    </citation>
    <scope>X-RAY CRYSTALLOGRAPHY (2.70 ANGSTROMS) OF 693-1083</scope>
    <scope>FUNCTION</scope>
    <scope>CATALYTIC ACTIVITY</scope>
    <scope>AUTOUBIQUITINATION</scope>
    <scope>UBIQUITINATION AT LYS-903</scope>
    <scope>MUTAGENESIS OF 758-ASN--LEU-762; GLN-961; LYS-1013 AND SER-1049</scope>
</reference>
<reference key="23">
    <citation type="journal article" date="2023" name="Genet. Med.">
        <title>Biallelic variants in HECT E3 paralogs, HECTD4 and UBE3C, encoding ubiquitin ligases cause neurodevelopmental disorders that overlap with Angelman syndrome.</title>
        <authorList>
            <person name="Faqeih E.A."/>
            <person name="Alghamdi M.A."/>
            <person name="Almahroos M.A."/>
            <person name="Alharby E."/>
            <person name="Almuntashri M."/>
            <person name="Alshangiti A.M."/>
            <person name="Clement P."/>
            <person name="Calame D.G."/>
            <person name="Qebibo L."/>
            <person name="Burglen L."/>
            <person name="Doco-Fenzy M."/>
            <person name="Mastrangelo M."/>
            <person name="Torella A."/>
            <person name="Manti F."/>
            <person name="Nigro V."/>
            <person name="Alban Z."/>
            <person name="Alharbi G.S."/>
            <person name="Hashmi J.A."/>
            <person name="Alraddadi R."/>
            <person name="Alamri R."/>
            <person name="Mitani T."/>
            <person name="Magalie B."/>
            <person name="Coban-Akdemir Z."/>
            <person name="Geckinli B.B."/>
            <person name="Pehlivan D."/>
            <person name="Romito A."/>
            <person name="Karageorgou V."/>
            <person name="Martini J."/>
            <person name="Colin E."/>
            <person name="Bonneau D."/>
            <person name="Bertoli-Avella A."/>
            <person name="Lupski J.R."/>
            <person name="Pastore A."/>
            <person name="Peake R.W.A."/>
            <person name="Dallol A."/>
            <person name="Alfadhel M."/>
            <person name="Almontashiri N.A.M."/>
        </authorList>
    </citation>
    <scope>INVOLVEMENT IN NEDSMB</scope>
</reference>
<keyword id="KW-0002">3D-structure</keyword>
<keyword id="KW-0025">Alternative splicing</keyword>
<keyword id="KW-0903">Direct protein sequencing</keyword>
<keyword id="KW-0991">Intellectual disability</keyword>
<keyword id="KW-1017">Isopeptide bond</keyword>
<keyword id="KW-0647">Proteasome</keyword>
<keyword id="KW-1267">Proteomics identification</keyword>
<keyword id="KW-1185">Reference proteome</keyword>
<keyword id="KW-0808">Transferase</keyword>
<keyword id="KW-0832">Ubl conjugation</keyword>
<keyword id="KW-0833">Ubl conjugation pathway</keyword>
<evidence type="ECO:0000255" key="1">
    <source>
        <dbReference type="PROSITE-ProRule" id="PRU00104"/>
    </source>
</evidence>
<evidence type="ECO:0000255" key="2">
    <source>
        <dbReference type="PROSITE-ProRule" id="PRU00116"/>
    </source>
</evidence>
<evidence type="ECO:0000256" key="3">
    <source>
        <dbReference type="SAM" id="MobiDB-lite"/>
    </source>
</evidence>
<evidence type="ECO:0000269" key="4">
    <source>
    </source>
</evidence>
<evidence type="ECO:0000269" key="5">
    <source>
    </source>
</evidence>
<evidence type="ECO:0000269" key="6">
    <source>
    </source>
</evidence>
<evidence type="ECO:0000269" key="7">
    <source>
    </source>
</evidence>
<evidence type="ECO:0000269" key="8">
    <source>
    </source>
</evidence>
<evidence type="ECO:0000269" key="9">
    <source>
    </source>
</evidence>
<evidence type="ECO:0000269" key="10">
    <source>
    </source>
</evidence>
<evidence type="ECO:0000269" key="11">
    <source>
    </source>
</evidence>
<evidence type="ECO:0000269" key="12">
    <source>
    </source>
</evidence>
<evidence type="ECO:0000269" key="13">
    <source>
    </source>
</evidence>
<evidence type="ECO:0000269" key="14">
    <source>
    </source>
</evidence>
<evidence type="ECO:0000269" key="15">
    <source>
    </source>
</evidence>
<evidence type="ECO:0000269" key="16">
    <source>
    </source>
</evidence>
<evidence type="ECO:0000269" key="17">
    <source>
    </source>
</evidence>
<evidence type="ECO:0000269" key="18">
    <source>
    </source>
</evidence>
<evidence type="ECO:0000269" key="19">
    <source>
    </source>
</evidence>
<evidence type="ECO:0000303" key="20">
    <source>
    </source>
</evidence>
<evidence type="ECO:0000303" key="21">
    <source>
    </source>
</evidence>
<evidence type="ECO:0000303" key="22">
    <source>
    </source>
</evidence>
<evidence type="ECO:0000303" key="23">
    <source>
    </source>
</evidence>
<evidence type="ECO:0000303" key="24">
    <source>
    </source>
</evidence>
<evidence type="ECO:0000303" key="25">
    <source>
    </source>
</evidence>
<evidence type="ECO:0000305" key="26"/>
<evidence type="ECO:0000305" key="27">
    <source>
    </source>
</evidence>
<evidence type="ECO:0000305" key="28">
    <source>
    </source>
</evidence>
<evidence type="ECO:0000305" key="29">
    <source>
    </source>
</evidence>
<evidence type="ECO:0000305" key="30">
    <source>
    </source>
</evidence>
<evidence type="ECO:0000305" key="31">
    <source>
    </source>
</evidence>
<evidence type="ECO:0000312" key="32">
    <source>
        <dbReference type="HGNC" id="HGNC:16803"/>
    </source>
</evidence>
<evidence type="ECO:0007744" key="33">
    <source>
        <dbReference type="PDB" id="6K2C"/>
    </source>
</evidence>
<evidence type="ECO:0007829" key="34">
    <source>
        <dbReference type="PDB" id="6K2C"/>
    </source>
</evidence>
<proteinExistence type="evidence at protein level"/>
<sequence>MFSFEGDFKTRPKVSLGGASRKEEKASLLHRTQEERRKREEERRRLKNAIIIQSFIRGYRDRKQQYSIQRSAFDRCATLSQSGGAFPIANGPNLTLLVRQLLFFYKQNEDSKRLIWLYQNLIKHSSLFVKQLDGSERLTCLFQIKRLMSLCCRLLQNCNDDSLNVALPMRMLEVFSSENTYLPVLQDASYVVSVIEQILHYMIHNGYYRSLYLLINSKLPSSIEYSDLSRVPIAKILLENVLKPLHFTYNSCPEGARQQVFTAFTEEFLAAPFTDQIFHFIIPALADAQTVFPYEPFLNALLLIESRCSRKSGGAPWLFYFVLTVGENYLGALSEEGLLVYLRVLQTFLSQLPVSPASASCHDSASDSEEESEEADKPSSPEDGRLSVSYITEECLKKLDTKQQTNTLLNLVWRDSASEEVFTTMASVCHTLMVQHRMMVPKVRLLYSLAFNARFLRHLWFLISSMSTRMITGSMVPLLQVISRGSPMSFEDSSRIIPLFYLFSSLFSHSLISIHDNEFFGDPIEVVGQRQSSMMPFTLEELIMLSRCLRDACLGIIKLAYPETKPEVREEYITAFQSIGVTTSSEMQQCIQMEQKRWIQLFKVITNLVKMLKSRDTRRNFCPPNHWLSEQEDIKADKVTQLYVPASRHVWRFRRMGRIGPLQSTLDVGLESPPLSVSEERQLAVLTELPFVVPFEERVKIFQRLIYADKQEVQGDGPFLDGINVTIRRNYIYEDAYDKLSPENEPDLKKRIRVHLLNAHGLDEAGIDGGGIFREFLNELLKSGFNPNQGFFKTTNEGLLYPNPAAQMLVGDSFARHYYFLGRMLGKALYENMLVELPFAGFFLSKLLGTSADVDIHHLASLDPEVYKNLLFLKSYEDDVEELGLNFTVVNNDLGEAQVVELKFGGKDIPVTSANRIAYIHLVADYRLNRQIRQHCLAFRQGLANVVSLEWLRMFDQQEIQVLISGAQVPISLEDLKSFTNYSGGYSADHPVIKVFWRVVEGFTDEEKRKLLKFVTSCSRPPLLGFKELYPAFCIHNGGSDLERLPTASTCMNLLKLPEFYDETLLRSKLLYAIECAAGFELS</sequence>
<dbReference type="EC" id="2.3.2.26" evidence="4 10 11 12 15 16 17"/>
<dbReference type="EMBL" id="D13635">
    <property type="protein sequence ID" value="BAA02799.2"/>
    <property type="status" value="ALT_INIT"/>
    <property type="molecule type" value="mRNA"/>
</dbReference>
<dbReference type="EMBL" id="AC004898">
    <property type="status" value="NOT_ANNOTATED_CDS"/>
    <property type="molecule type" value="Genomic_DNA"/>
</dbReference>
<dbReference type="EMBL" id="AC004975">
    <property type="protein sequence ID" value="AAD51453.1"/>
    <property type="molecule type" value="Genomic_DNA"/>
</dbReference>
<dbReference type="EMBL" id="CH236954">
    <property type="protein sequence ID" value="EAL23922.1"/>
    <property type="molecule type" value="Genomic_DNA"/>
</dbReference>
<dbReference type="EMBL" id="CH471149">
    <property type="protein sequence ID" value="EAX04568.1"/>
    <property type="molecule type" value="Genomic_DNA"/>
</dbReference>
<dbReference type="EMBL" id="BC014029">
    <property type="protein sequence ID" value="AAH14029.1"/>
    <property type="molecule type" value="mRNA"/>
</dbReference>
<dbReference type="EMBL" id="BC026241">
    <property type="protein sequence ID" value="AAH26241.1"/>
    <property type="molecule type" value="mRNA"/>
</dbReference>
<dbReference type="CCDS" id="CCDS34789.1">
    <molecule id="Q15386-1"/>
</dbReference>
<dbReference type="PIR" id="A38919">
    <property type="entry name" value="A38919"/>
</dbReference>
<dbReference type="RefSeq" id="NP_055486.2">
    <molecule id="Q15386-1"/>
    <property type="nucleotide sequence ID" value="NM_014671.3"/>
</dbReference>
<dbReference type="PDB" id="6K2C">
    <property type="method" value="X-ray"/>
    <property type="resolution" value="2.70 A"/>
    <property type="chains" value="A=693-1083"/>
</dbReference>
<dbReference type="PDBsum" id="6K2C"/>
<dbReference type="SMR" id="Q15386"/>
<dbReference type="BioGRID" id="115043">
    <property type="interactions" value="246"/>
</dbReference>
<dbReference type="FunCoup" id="Q15386">
    <property type="interactions" value="3518"/>
</dbReference>
<dbReference type="IntAct" id="Q15386">
    <property type="interactions" value="108"/>
</dbReference>
<dbReference type="MINT" id="Q15386"/>
<dbReference type="STRING" id="9606.ENSP00000309198"/>
<dbReference type="GlyGen" id="Q15386">
    <property type="glycosylation" value="1 site, 1 O-linked glycan (1 site)"/>
</dbReference>
<dbReference type="iPTMnet" id="Q15386"/>
<dbReference type="PhosphoSitePlus" id="Q15386"/>
<dbReference type="SwissPalm" id="Q15386"/>
<dbReference type="BioMuta" id="UBE3C"/>
<dbReference type="DMDM" id="67462009"/>
<dbReference type="jPOST" id="Q15386"/>
<dbReference type="MassIVE" id="Q15386"/>
<dbReference type="PaxDb" id="9606-ENSP00000309198"/>
<dbReference type="PeptideAtlas" id="Q15386"/>
<dbReference type="ProteomicsDB" id="60555">
    <molecule id="Q15386-1"/>
</dbReference>
<dbReference type="ProteomicsDB" id="60556">
    <molecule id="Q15386-2"/>
</dbReference>
<dbReference type="ProteomicsDB" id="60557">
    <molecule id="Q15386-3"/>
</dbReference>
<dbReference type="Pumba" id="Q15386"/>
<dbReference type="Antibodypedia" id="33178">
    <property type="antibodies" value="158 antibodies from 26 providers"/>
</dbReference>
<dbReference type="DNASU" id="9690"/>
<dbReference type="Ensembl" id="ENST00000348165.10">
    <molecule id="Q15386-1"/>
    <property type="protein sequence ID" value="ENSP00000309198.8"/>
    <property type="gene ID" value="ENSG00000009335.19"/>
</dbReference>
<dbReference type="Ensembl" id="ENST00000389103.4">
    <molecule id="Q15386-3"/>
    <property type="protein sequence ID" value="ENSP00000373755.4"/>
    <property type="gene ID" value="ENSG00000009335.19"/>
</dbReference>
<dbReference type="GeneID" id="9690"/>
<dbReference type="KEGG" id="hsa:9690"/>
<dbReference type="MANE-Select" id="ENST00000348165.10">
    <property type="protein sequence ID" value="ENSP00000309198.8"/>
    <property type="RefSeq nucleotide sequence ID" value="NM_014671.3"/>
    <property type="RefSeq protein sequence ID" value="NP_055486.2"/>
</dbReference>
<dbReference type="UCSC" id="uc003wnf.3">
    <molecule id="Q15386-1"/>
    <property type="organism name" value="human"/>
</dbReference>
<dbReference type="AGR" id="HGNC:16803"/>
<dbReference type="CTD" id="9690"/>
<dbReference type="DisGeNET" id="9690"/>
<dbReference type="GeneCards" id="UBE3C"/>
<dbReference type="HGNC" id="HGNC:16803">
    <property type="gene designation" value="UBE3C"/>
</dbReference>
<dbReference type="HPA" id="ENSG00000009335">
    <property type="expression patterns" value="Low tissue specificity"/>
</dbReference>
<dbReference type="MalaCards" id="UBE3C"/>
<dbReference type="MIM" id="614454">
    <property type="type" value="gene"/>
</dbReference>
<dbReference type="MIM" id="620270">
    <property type="type" value="phenotype"/>
</dbReference>
<dbReference type="neXtProt" id="NX_Q15386"/>
<dbReference type="OpenTargets" id="ENSG00000009335"/>
<dbReference type="PharmGKB" id="PA134905339"/>
<dbReference type="VEuPathDB" id="HostDB:ENSG00000009335"/>
<dbReference type="eggNOG" id="KOG0942">
    <property type="taxonomic scope" value="Eukaryota"/>
</dbReference>
<dbReference type="GeneTree" id="ENSGT00940000156321"/>
<dbReference type="HOGENOM" id="CLU_002173_2_1_1"/>
<dbReference type="InParanoid" id="Q15386"/>
<dbReference type="OMA" id="EKHYYFI"/>
<dbReference type="OrthoDB" id="8068875at2759"/>
<dbReference type="PAN-GO" id="Q15386">
    <property type="GO annotations" value="3 GO annotations based on evolutionary models"/>
</dbReference>
<dbReference type="PhylomeDB" id="Q15386"/>
<dbReference type="TreeFam" id="TF106144"/>
<dbReference type="BRENDA" id="2.3.2.26">
    <property type="organism ID" value="2681"/>
</dbReference>
<dbReference type="PathwayCommons" id="Q15386"/>
<dbReference type="Reactome" id="R-HSA-983168">
    <property type="pathway name" value="Antigen processing: Ubiquitination &amp; Proteasome degradation"/>
</dbReference>
<dbReference type="SignaLink" id="Q15386"/>
<dbReference type="SIGNOR" id="Q15386"/>
<dbReference type="UniPathway" id="UPA00143"/>
<dbReference type="BioGRID-ORCS" id="9690">
    <property type="hits" value="26 hits in 1209 CRISPR screens"/>
</dbReference>
<dbReference type="CD-CODE" id="FB4E32DD">
    <property type="entry name" value="Presynaptic clusters and postsynaptic densities"/>
</dbReference>
<dbReference type="ChiTaRS" id="UBE3C">
    <property type="organism name" value="human"/>
</dbReference>
<dbReference type="GeneWiki" id="UBE3C"/>
<dbReference type="GenomeRNAi" id="9690"/>
<dbReference type="Pharos" id="Q15386">
    <property type="development level" value="Tbio"/>
</dbReference>
<dbReference type="PRO" id="PR:Q15386"/>
<dbReference type="Proteomes" id="UP000005640">
    <property type="component" value="Chromosome 7"/>
</dbReference>
<dbReference type="RNAct" id="Q15386">
    <property type="molecule type" value="protein"/>
</dbReference>
<dbReference type="Bgee" id="ENSG00000009335">
    <property type="expression patterns" value="Expressed in sural nerve and 208 other cell types or tissues"/>
</dbReference>
<dbReference type="ExpressionAtlas" id="Q15386">
    <property type="expression patterns" value="baseline and differential"/>
</dbReference>
<dbReference type="GO" id="GO:0000502">
    <property type="term" value="C:proteasome complex"/>
    <property type="evidence" value="ECO:0007669"/>
    <property type="project" value="UniProtKB-KW"/>
</dbReference>
<dbReference type="GO" id="GO:0061630">
    <property type="term" value="F:ubiquitin protein ligase activity"/>
    <property type="evidence" value="ECO:0000314"/>
    <property type="project" value="UniProt"/>
</dbReference>
<dbReference type="GO" id="GO:0035519">
    <property type="term" value="P:protein K29-linked ubiquitination"/>
    <property type="evidence" value="ECO:0000314"/>
    <property type="project" value="UniProt"/>
</dbReference>
<dbReference type="GO" id="GO:0070936">
    <property type="term" value="P:protein K48-linked ubiquitination"/>
    <property type="evidence" value="ECO:0000314"/>
    <property type="project" value="UniProt"/>
</dbReference>
<dbReference type="GO" id="GO:0000209">
    <property type="term" value="P:protein polyubiquitination"/>
    <property type="evidence" value="ECO:0000314"/>
    <property type="project" value="UniProtKB"/>
</dbReference>
<dbReference type="GO" id="GO:0006511">
    <property type="term" value="P:ubiquitin-dependent protein catabolic process"/>
    <property type="evidence" value="ECO:0000314"/>
    <property type="project" value="UniProt"/>
</dbReference>
<dbReference type="CDD" id="cd00078">
    <property type="entry name" value="HECTc"/>
    <property type="match status" value="1"/>
</dbReference>
<dbReference type="FunFam" id="3.30.2160.10:FF:000002">
    <property type="entry name" value="Putative Ubiquitin-protein ligase E3C"/>
    <property type="match status" value="1"/>
</dbReference>
<dbReference type="FunFam" id="3.30.2410.10:FF:000011">
    <property type="entry name" value="Putative Ubiquitin-protein ligase E3C"/>
    <property type="match status" value="1"/>
</dbReference>
<dbReference type="FunFam" id="3.90.1750.10:FF:000014">
    <property type="entry name" value="Putative Ubiquitin-protein ligase E3C"/>
    <property type="match status" value="1"/>
</dbReference>
<dbReference type="Gene3D" id="3.30.2160.10">
    <property type="entry name" value="Hect, E3 ligase catalytic domain"/>
    <property type="match status" value="1"/>
</dbReference>
<dbReference type="Gene3D" id="3.30.2410.10">
    <property type="entry name" value="Hect, E3 ligase catalytic domain"/>
    <property type="match status" value="1"/>
</dbReference>
<dbReference type="Gene3D" id="3.90.1750.10">
    <property type="entry name" value="Hect, E3 ligase catalytic domains"/>
    <property type="match status" value="1"/>
</dbReference>
<dbReference type="InterPro" id="IPR044611">
    <property type="entry name" value="E3A/B/C-like"/>
</dbReference>
<dbReference type="InterPro" id="IPR000569">
    <property type="entry name" value="HECT_dom"/>
</dbReference>
<dbReference type="InterPro" id="IPR035983">
    <property type="entry name" value="Hect_E3_ubiquitin_ligase"/>
</dbReference>
<dbReference type="InterPro" id="IPR000048">
    <property type="entry name" value="IQ_motif_EF-hand-BS"/>
</dbReference>
<dbReference type="PANTHER" id="PTHR45700">
    <property type="entry name" value="UBIQUITIN-PROTEIN LIGASE E3C"/>
    <property type="match status" value="1"/>
</dbReference>
<dbReference type="PANTHER" id="PTHR45700:SF2">
    <property type="entry name" value="UBIQUITIN-PROTEIN LIGASE E3C"/>
    <property type="match status" value="1"/>
</dbReference>
<dbReference type="Pfam" id="PF00632">
    <property type="entry name" value="HECT"/>
    <property type="match status" value="1"/>
</dbReference>
<dbReference type="SMART" id="SM00119">
    <property type="entry name" value="HECTc"/>
    <property type="match status" value="1"/>
</dbReference>
<dbReference type="SMART" id="SM00015">
    <property type="entry name" value="IQ"/>
    <property type="match status" value="1"/>
</dbReference>
<dbReference type="SUPFAM" id="SSF56204">
    <property type="entry name" value="Hect, E3 ligase catalytic domain"/>
    <property type="match status" value="1"/>
</dbReference>
<dbReference type="PROSITE" id="PS50237">
    <property type="entry name" value="HECT"/>
    <property type="match status" value="1"/>
</dbReference>
<dbReference type="PROSITE" id="PS50096">
    <property type="entry name" value="IQ"/>
    <property type="match status" value="1"/>
</dbReference>
<gene>
    <name evidence="22 32" type="primary">UBE3C</name>
    <name evidence="24" type="synonym">KIAA0010</name>
    <name evidence="20" type="synonym">KIAA10</name>
</gene>
<feature type="chain" id="PRO_0000194982" description="Ubiquitin-protein ligase E3C">
    <location>
        <begin position="1"/>
        <end position="1083"/>
    </location>
</feature>
<feature type="domain" description="IQ" evidence="2">
    <location>
        <begin position="45"/>
        <end position="74"/>
    </location>
</feature>
<feature type="domain" description="HECT" evidence="1">
    <location>
        <begin position="744"/>
        <end position="1083"/>
    </location>
</feature>
<feature type="region of interest" description="Cis-determinant of acceptor ubiquitin-binding" evidence="6">
    <location>
        <begin position="1"/>
        <end position="60"/>
    </location>
</feature>
<feature type="region of interest" description="Disordered" evidence="3">
    <location>
        <begin position="1"/>
        <end position="40"/>
    </location>
</feature>
<feature type="region of interest" description="Disordered" evidence="3">
    <location>
        <begin position="355"/>
        <end position="385"/>
    </location>
</feature>
<feature type="compositionally biased region" description="Basic and acidic residues" evidence="3">
    <location>
        <begin position="1"/>
        <end position="10"/>
    </location>
</feature>
<feature type="compositionally biased region" description="Basic and acidic residues" evidence="3">
    <location>
        <begin position="20"/>
        <end position="40"/>
    </location>
</feature>
<feature type="compositionally biased region" description="Basic and acidic residues" evidence="3">
    <location>
        <begin position="375"/>
        <end position="385"/>
    </location>
</feature>
<feature type="active site" description="Glycyl thioester intermediate" evidence="27 28 29 30 31">
    <location>
        <position position="1051"/>
    </location>
</feature>
<feature type="cross-link" description="Glycyl lysine isopeptide (Lys-Gly) (interchain with G-Cter in ubiquitin); by autocatalysis" evidence="15">
    <location>
        <position position="903"/>
    </location>
</feature>
<feature type="splice variant" id="VSP_013953" description="In isoform 3." evidence="21">
    <location>
        <begin position="23"/>
        <end position="65"/>
    </location>
</feature>
<feature type="splice variant" id="VSP_013954" description="In isoform 3." evidence="21">
    <original>LLY</original>
    <variation>VYK</variation>
    <location>
        <begin position="445"/>
        <end position="447"/>
    </location>
</feature>
<feature type="splice variant" id="VSP_013955" description="In isoform 3." evidence="21">
    <location>
        <begin position="448"/>
        <end position="1083"/>
    </location>
</feature>
<feature type="splice variant" id="VSP_013956" description="In isoform 2." evidence="21">
    <original>TQLYVPASRH</original>
    <variation>LLKDLFNIYH</variation>
    <location>
        <begin position="640"/>
        <end position="649"/>
    </location>
</feature>
<feature type="splice variant" id="VSP_013957" description="In isoform 2." evidence="21">
    <location>
        <begin position="650"/>
        <end position="1083"/>
    </location>
</feature>
<feature type="mutagenesis site" description="Abolished E3 ubiquitin-protein ligase activity." evidence="15">
    <original>NAHGL</original>
    <variation>AAAAA</variation>
    <location>
        <begin position="758"/>
        <end position="762"/>
    </location>
</feature>
<feature type="mutagenesis site" description="Reduced E3 ubiquitin-protein ligase activity." evidence="15">
    <original>Q</original>
    <variation>A</variation>
    <variation>E</variation>
    <location>
        <position position="961"/>
    </location>
</feature>
<feature type="mutagenesis site" description="Increased E3 ubiquitin-protein ligase activity." evidence="15">
    <original>K</original>
    <variation>Q</variation>
    <location>
        <position position="1013"/>
    </location>
</feature>
<feature type="mutagenesis site" description="Reduced E3 ubiquitin-protein ligase activity." evidence="15">
    <original>S</original>
    <variation>H</variation>
    <location>
        <position position="1049"/>
    </location>
</feature>
<feature type="mutagenesis site" description="Abolishes E3 ubiquitin-protein ligase activity. No stimulation of in vitro CAND2 ubiquitination." evidence="5 8 9 10 11">
    <original>C</original>
    <variation>A</variation>
    <location>
        <position position="1051"/>
    </location>
</feature>
<feature type="sequence conflict" description="In Ref. 1; BAA02799." evidence="26" ref="1">
    <original>G</original>
    <variation>A</variation>
    <location>
        <position position="822"/>
    </location>
</feature>
<feature type="helix" evidence="34">
    <location>
        <begin position="695"/>
        <end position="712"/>
    </location>
</feature>
<feature type="strand" evidence="34">
    <location>
        <begin position="723"/>
        <end position="727"/>
    </location>
</feature>
<feature type="helix" evidence="34">
    <location>
        <begin position="729"/>
        <end position="731"/>
    </location>
</feature>
<feature type="helix" evidence="34">
    <location>
        <begin position="732"/>
        <end position="739"/>
    </location>
</feature>
<feature type="turn" evidence="34">
    <location>
        <begin position="742"/>
        <end position="744"/>
    </location>
</feature>
<feature type="strand" evidence="34">
    <location>
        <begin position="752"/>
        <end position="756"/>
    </location>
</feature>
<feature type="helix" evidence="34">
    <location>
        <begin position="770"/>
        <end position="784"/>
    </location>
</feature>
<feature type="helix" evidence="34">
    <location>
        <begin position="787"/>
        <end position="789"/>
    </location>
</feature>
<feature type="strand" evidence="34">
    <location>
        <begin position="790"/>
        <end position="794"/>
    </location>
</feature>
<feature type="strand" evidence="34">
    <location>
        <begin position="796"/>
        <end position="798"/>
    </location>
</feature>
<feature type="strand" evidence="34">
    <location>
        <begin position="800"/>
        <end position="802"/>
    </location>
</feature>
<feature type="helix" evidence="34">
    <location>
        <begin position="806"/>
        <end position="810"/>
    </location>
</feature>
<feature type="helix" evidence="34">
    <location>
        <begin position="814"/>
        <end position="830"/>
    </location>
</feature>
<feature type="helix" evidence="34">
    <location>
        <begin position="841"/>
        <end position="848"/>
    </location>
</feature>
<feature type="turn" evidence="34">
    <location>
        <begin position="929"/>
        <end position="932"/>
    </location>
</feature>
<feature type="helix" evidence="34">
    <location>
        <begin position="933"/>
        <end position="944"/>
    </location>
</feature>
<feature type="helix" evidence="34">
    <location>
        <begin position="949"/>
        <end position="952"/>
    </location>
</feature>
<feature type="helix" evidence="34">
    <location>
        <begin position="957"/>
        <end position="965"/>
    </location>
</feature>
<feature type="helix" evidence="34">
    <location>
        <begin position="973"/>
        <end position="978"/>
    </location>
</feature>
<feature type="strand" evidence="34">
    <location>
        <begin position="981"/>
        <end position="983"/>
    </location>
</feature>
<feature type="helix" evidence="34">
    <location>
        <begin position="991"/>
        <end position="1001"/>
    </location>
</feature>
<feature type="helix" evidence="34">
    <location>
        <begin position="1005"/>
        <end position="1016"/>
    </location>
</feature>
<feature type="helix" evidence="34">
    <location>
        <begin position="1026"/>
        <end position="1028"/>
    </location>
</feature>
<feature type="strand" evidence="34">
    <location>
        <begin position="1034"/>
        <end position="1037"/>
    </location>
</feature>
<feature type="strand" evidence="34">
    <location>
        <begin position="1047"/>
        <end position="1049"/>
    </location>
</feature>
<feature type="helix" evidence="34">
    <location>
        <begin position="1050"/>
        <end position="1052"/>
    </location>
</feature>
<feature type="strand" evidence="34">
    <location>
        <begin position="1054"/>
        <end position="1057"/>
    </location>
</feature>
<feature type="helix" evidence="34">
    <location>
        <begin position="1063"/>
        <end position="1077"/>
    </location>
</feature>
<comment type="function">
    <text evidence="4 5 6 7 8 9 10 11 12 13 14 15 16 17 19">E3 ubiquitin-protein ligase that specifically catalyzes 'Lys-29'- and 'Lys-48'-linked polyubiquitin chains (PubMed:11278995, PubMed:12692129, PubMed:16341092, PubMed:16601690, PubMed:24158444, PubMed:24811749, PubMed:25752573, PubMed:25752577, PubMed:32039437, PubMed:33637724, PubMed:34239127). Accepts ubiquitin from the E2 ubiquitin-conjugating enzyme UBE2D1 in the form of a thioester and then directly transfers the ubiquitin to targeted substrates (PubMed:32039437, PubMed:9575161). Associates with the proteasome and promotes elongation of ubiquitin chains on substrates bound to the 26S proteasome (PubMed:24158444, PubMed:28396413, PubMed:31375563). Also catalyzes 'Lys-29'- and 'Lys-48'-linked ubiquitination of 26S proteasome subunit ADRM1/RPN13 in response to proteotoxic stress, impairing the ability of the proteasome to bind and degrade ubiquitin-conjugated proteins (PubMed:24811749, PubMed:31375563). Acts as a negative regulator of autophagy by mediating 'Lys-29'- and 'Lys-48'-linked ubiquitination of PIK3C3/VPS34, promoting its degradation (PubMed:33637724). Can assemble unanchored poly-ubiquitin chains in either 'Lys-29'- or 'Lys-48'-linked polyubiquitin chains; with some preference for 'Lys-48' linkages (PubMed:11278995, PubMed:16601690, PubMed:25752577). Acts as a negative regulator of type I interferon by mediating 'Lys-48'-linked ubiquitination of IRF3 and IRF7, leading to their degradation by the proteasome (PubMed:21167755). Catalyzes ubiquitination and degradation of CAND2 (PubMed:12692129).</text>
</comment>
<comment type="catalytic activity">
    <reaction evidence="4 9 10 11 12 15 16 17">
        <text>S-ubiquitinyl-[E2 ubiquitin-conjugating enzyme]-L-cysteine + [acceptor protein]-L-lysine = [E2 ubiquitin-conjugating enzyme]-L-cysteine + N(6)-ubiquitinyl-[acceptor protein]-L-lysine.</text>
        <dbReference type="EC" id="2.3.2.26"/>
    </reaction>
</comment>
<comment type="pathway">
    <text evidence="4 5 7 8 9 10 11 12 16 17">Protein modification; protein ubiquitination.</text>
</comment>
<comment type="subunit">
    <text evidence="4 5 9 19">Interacts with 26S proteasomes (PubMed:12692129, PubMed:24158444). Interacts (via the HECT domain) with UBE2D1 and, less efficiently, with UBE2L3 (PubMed:11278995, PubMed:9575161).</text>
</comment>
<comment type="interaction">
    <interactant intactId="EBI-1058871">
        <id>Q15386</id>
    </interactant>
    <interactant intactId="EBI-618309">
        <id>Q08379</id>
        <label>GOLGA2</label>
    </interactant>
    <organismsDiffer>false</organismsDiffer>
    <experiments>3</experiments>
</comment>
<comment type="interaction">
    <interactant intactId="EBI-25833079">
        <id>Q15386-3</id>
    </interactant>
    <interactant intactId="EBI-12275524">
        <id>P23560-2</id>
        <label>BDNF</label>
    </interactant>
    <organismsDiffer>false</organismsDiffer>
    <experiments>3</experiments>
</comment>
<comment type="alternative products">
    <event type="alternative splicing"/>
    <isoform>
        <id>Q15386-1</id>
        <name>1</name>
        <sequence type="displayed"/>
    </isoform>
    <isoform>
        <id>Q15386-2</id>
        <name>2</name>
        <sequence type="described" ref="VSP_013956 VSP_013957"/>
    </isoform>
    <isoform>
        <id>Q15386-3</id>
        <name>3</name>
        <sequence type="described" ref="VSP_013953 VSP_013954 VSP_013955"/>
    </isoform>
</comment>
<comment type="tissue specificity">
    <text evidence="4 5 19">Highly expressed in skeletal muscle. Detected at much lower levels in kidney and pancreas.</text>
</comment>
<comment type="PTM">
    <text evidence="4 11 15">Autoubiquitinated; promoting its own degradation.</text>
</comment>
<comment type="disease" evidence="18">
    <disease id="DI-06647">
        <name>Neurodevelopmental disorder with absent speech and movement and behavioral abnormalities</name>
        <acronym>NEDSMB</acronym>
        <description>An autosomal recessive disorder characterized by global developmental delay apparent in infancy, severely impaired intellectual development, absent speech, and aggressive behavior.</description>
        <dbReference type="MIM" id="620270"/>
    </disease>
    <text>The disease may be caused by variants affecting the gene represented in this entry.</text>
</comment>
<comment type="similarity">
    <text evidence="26">Belongs to the UBE3C family.</text>
</comment>
<comment type="sequence caution" evidence="26">
    <conflict type="erroneous initiation">
        <sequence resource="EMBL-CDS" id="BAA02799"/>
    </conflict>
    <text>Extended N-terminus.</text>
</comment>